<gene>
    <name evidence="1" type="primary">pepA</name>
    <name type="ordered locus">SSON_4445</name>
</gene>
<name>AMPA_SHISS</name>
<proteinExistence type="inferred from homology"/>
<accession>Q3YU89</accession>
<sequence length="503" mass="54880">MEFSVKSGSPEKQRSACIVVGVFEPRRLSPIAEQLDKISDGYISALLRRGELEGKPGQTLLLHHVPNVLSERILLIGCGKERELDERQYKQVIQKTINTLNDTGSMEAVCFLTELHVKGRNNYWKVRQAVETAKETLYSFDQLKTNKSEPRRPLRKMVFNVPTRRELTSGERAIQHGLAIAAGIKAAKDLGNMPPNICNAAYLASQARQLADSYSKNVITRVIGEQQMKELGMHSYLAVGQGSQNESLMSVIEYKGNASEDARPIVLVGKGLTFDSGGISIKPSEGMDEMKYDMCGAAAVYGVMRMVAELQLPINVIGVLAGCENMPGGRAYRPGDVLTTMSGQTVEVLNTDAEGRLVLCDVLTYVERFEPEAVIDVATLTGACVIALGHHITGLMANHNPLAHELIAASEQSGDRAWRLPLGDEYQEQLESNFADMANIGGRPGGAITAGCFLSRFTRKYNWAHLDIAGTAWRSGKAKGATGRPVALLAQFLLNRAGFNGEE</sequence>
<organism>
    <name type="scientific">Shigella sonnei (strain Ss046)</name>
    <dbReference type="NCBI Taxonomy" id="300269"/>
    <lineage>
        <taxon>Bacteria</taxon>
        <taxon>Pseudomonadati</taxon>
        <taxon>Pseudomonadota</taxon>
        <taxon>Gammaproteobacteria</taxon>
        <taxon>Enterobacterales</taxon>
        <taxon>Enterobacteriaceae</taxon>
        <taxon>Shigella</taxon>
    </lineage>
</organism>
<reference key="1">
    <citation type="journal article" date="2005" name="Nucleic Acids Res.">
        <title>Genome dynamics and diversity of Shigella species, the etiologic agents of bacillary dysentery.</title>
        <authorList>
            <person name="Yang F."/>
            <person name="Yang J."/>
            <person name="Zhang X."/>
            <person name="Chen L."/>
            <person name="Jiang Y."/>
            <person name="Yan Y."/>
            <person name="Tang X."/>
            <person name="Wang J."/>
            <person name="Xiong Z."/>
            <person name="Dong J."/>
            <person name="Xue Y."/>
            <person name="Zhu Y."/>
            <person name="Xu X."/>
            <person name="Sun L."/>
            <person name="Chen S."/>
            <person name="Nie H."/>
            <person name="Peng J."/>
            <person name="Xu J."/>
            <person name="Wang Y."/>
            <person name="Yuan Z."/>
            <person name="Wen Y."/>
            <person name="Yao Z."/>
            <person name="Shen Y."/>
            <person name="Qiang B."/>
            <person name="Hou Y."/>
            <person name="Yu J."/>
            <person name="Jin Q."/>
        </authorList>
    </citation>
    <scope>NUCLEOTIDE SEQUENCE [LARGE SCALE GENOMIC DNA]</scope>
    <source>
        <strain>Ss046</strain>
    </source>
</reference>
<keyword id="KW-0031">Aminopeptidase</keyword>
<keyword id="KW-0963">Cytoplasm</keyword>
<keyword id="KW-0378">Hydrolase</keyword>
<keyword id="KW-0464">Manganese</keyword>
<keyword id="KW-0479">Metal-binding</keyword>
<keyword id="KW-0645">Protease</keyword>
<keyword id="KW-1185">Reference proteome</keyword>
<feature type="chain" id="PRO_1000019983" description="Probable cytosol aminopeptidase">
    <location>
        <begin position="1"/>
        <end position="503"/>
    </location>
</feature>
<feature type="active site" evidence="1">
    <location>
        <position position="282"/>
    </location>
</feature>
<feature type="active site" evidence="1">
    <location>
        <position position="356"/>
    </location>
</feature>
<feature type="binding site" evidence="1">
    <location>
        <position position="270"/>
    </location>
    <ligand>
        <name>Mn(2+)</name>
        <dbReference type="ChEBI" id="CHEBI:29035"/>
        <label>2</label>
    </ligand>
</feature>
<feature type="binding site" evidence="1">
    <location>
        <position position="275"/>
    </location>
    <ligand>
        <name>Mn(2+)</name>
        <dbReference type="ChEBI" id="CHEBI:29035"/>
        <label>1</label>
    </ligand>
</feature>
<feature type="binding site" evidence="1">
    <location>
        <position position="275"/>
    </location>
    <ligand>
        <name>Mn(2+)</name>
        <dbReference type="ChEBI" id="CHEBI:29035"/>
        <label>2</label>
    </ligand>
</feature>
<feature type="binding site" evidence="1">
    <location>
        <position position="293"/>
    </location>
    <ligand>
        <name>Mn(2+)</name>
        <dbReference type="ChEBI" id="CHEBI:29035"/>
        <label>2</label>
    </ligand>
</feature>
<feature type="binding site" evidence="1">
    <location>
        <position position="352"/>
    </location>
    <ligand>
        <name>Mn(2+)</name>
        <dbReference type="ChEBI" id="CHEBI:29035"/>
        <label>1</label>
    </ligand>
</feature>
<feature type="binding site" evidence="1">
    <location>
        <position position="354"/>
    </location>
    <ligand>
        <name>Mn(2+)</name>
        <dbReference type="ChEBI" id="CHEBI:29035"/>
        <label>1</label>
    </ligand>
</feature>
<feature type="binding site" evidence="1">
    <location>
        <position position="354"/>
    </location>
    <ligand>
        <name>Mn(2+)</name>
        <dbReference type="ChEBI" id="CHEBI:29035"/>
        <label>2</label>
    </ligand>
</feature>
<comment type="function">
    <text evidence="1">Presumably involved in the processing and regular turnover of intracellular proteins. Catalyzes the removal of unsubstituted N-terminal amino acids from various peptides.</text>
</comment>
<comment type="catalytic activity">
    <reaction evidence="1">
        <text>Release of an N-terminal amino acid, Xaa-|-Yaa-, in which Xaa is preferably Leu, but may be other amino acids including Pro although not Arg or Lys, and Yaa may be Pro. Amino acid amides and methyl esters are also readily hydrolyzed, but rates on arylamides are exceedingly low.</text>
        <dbReference type="EC" id="3.4.11.1"/>
    </reaction>
</comment>
<comment type="catalytic activity">
    <reaction evidence="1">
        <text>Release of an N-terminal amino acid, preferentially leucine, but not glutamic or aspartic acids.</text>
        <dbReference type="EC" id="3.4.11.10"/>
    </reaction>
</comment>
<comment type="cofactor">
    <cofactor evidence="1">
        <name>Mn(2+)</name>
        <dbReference type="ChEBI" id="CHEBI:29035"/>
    </cofactor>
    <text evidence="1">Binds 2 manganese ions per subunit.</text>
</comment>
<comment type="subcellular location">
    <subcellularLocation>
        <location evidence="1">Cytoplasm</location>
    </subcellularLocation>
</comment>
<comment type="similarity">
    <text evidence="1">Belongs to the peptidase M17 family.</text>
</comment>
<evidence type="ECO:0000255" key="1">
    <source>
        <dbReference type="HAMAP-Rule" id="MF_00181"/>
    </source>
</evidence>
<dbReference type="EC" id="3.4.11.1" evidence="1"/>
<dbReference type="EC" id="3.4.11.10" evidence="1"/>
<dbReference type="EMBL" id="CP000038">
    <property type="protein sequence ID" value="AAZ90923.1"/>
    <property type="molecule type" value="Genomic_DNA"/>
</dbReference>
<dbReference type="RefSeq" id="WP_000397144.1">
    <property type="nucleotide sequence ID" value="NC_007384.1"/>
</dbReference>
<dbReference type="SMR" id="Q3YU89"/>
<dbReference type="MEROPS" id="M17.003"/>
<dbReference type="GeneID" id="93777558"/>
<dbReference type="KEGG" id="ssn:SSON_4445"/>
<dbReference type="HOGENOM" id="CLU_013734_2_2_6"/>
<dbReference type="Proteomes" id="UP000002529">
    <property type="component" value="Chromosome"/>
</dbReference>
<dbReference type="GO" id="GO:0005737">
    <property type="term" value="C:cytoplasm"/>
    <property type="evidence" value="ECO:0007669"/>
    <property type="project" value="UniProtKB-SubCell"/>
</dbReference>
<dbReference type="GO" id="GO:0030145">
    <property type="term" value="F:manganese ion binding"/>
    <property type="evidence" value="ECO:0007669"/>
    <property type="project" value="UniProtKB-UniRule"/>
</dbReference>
<dbReference type="GO" id="GO:0070006">
    <property type="term" value="F:metalloaminopeptidase activity"/>
    <property type="evidence" value="ECO:0007669"/>
    <property type="project" value="InterPro"/>
</dbReference>
<dbReference type="GO" id="GO:0006508">
    <property type="term" value="P:proteolysis"/>
    <property type="evidence" value="ECO:0007669"/>
    <property type="project" value="UniProtKB-KW"/>
</dbReference>
<dbReference type="CDD" id="cd00433">
    <property type="entry name" value="Peptidase_M17"/>
    <property type="match status" value="1"/>
</dbReference>
<dbReference type="FunFam" id="3.40.220.10:FF:000001">
    <property type="entry name" value="Probable cytosol aminopeptidase"/>
    <property type="match status" value="1"/>
</dbReference>
<dbReference type="FunFam" id="3.40.630.10:FF:000004">
    <property type="entry name" value="Probable cytosol aminopeptidase"/>
    <property type="match status" value="1"/>
</dbReference>
<dbReference type="Gene3D" id="3.40.220.10">
    <property type="entry name" value="Leucine Aminopeptidase, subunit E, domain 1"/>
    <property type="match status" value="1"/>
</dbReference>
<dbReference type="Gene3D" id="3.40.630.10">
    <property type="entry name" value="Zn peptidases"/>
    <property type="match status" value="1"/>
</dbReference>
<dbReference type="HAMAP" id="MF_00181">
    <property type="entry name" value="Cytosol_peptidase_M17"/>
    <property type="match status" value="1"/>
</dbReference>
<dbReference type="InterPro" id="IPR011356">
    <property type="entry name" value="Leucine_aapep/pepB"/>
</dbReference>
<dbReference type="InterPro" id="IPR043472">
    <property type="entry name" value="Macro_dom-like"/>
</dbReference>
<dbReference type="InterPro" id="IPR000819">
    <property type="entry name" value="Peptidase_M17_C"/>
</dbReference>
<dbReference type="InterPro" id="IPR023042">
    <property type="entry name" value="Peptidase_M17_leu_NH2_pept"/>
</dbReference>
<dbReference type="InterPro" id="IPR008283">
    <property type="entry name" value="Peptidase_M17_N"/>
</dbReference>
<dbReference type="NCBIfam" id="NF002072">
    <property type="entry name" value="PRK00913.1-1"/>
    <property type="match status" value="1"/>
</dbReference>
<dbReference type="NCBIfam" id="NF002073">
    <property type="entry name" value="PRK00913.1-2"/>
    <property type="match status" value="1"/>
</dbReference>
<dbReference type="NCBIfam" id="NF002074">
    <property type="entry name" value="PRK00913.1-4"/>
    <property type="match status" value="1"/>
</dbReference>
<dbReference type="PANTHER" id="PTHR11963:SF23">
    <property type="entry name" value="CYTOSOL AMINOPEPTIDASE"/>
    <property type="match status" value="1"/>
</dbReference>
<dbReference type="PANTHER" id="PTHR11963">
    <property type="entry name" value="LEUCINE AMINOPEPTIDASE-RELATED"/>
    <property type="match status" value="1"/>
</dbReference>
<dbReference type="Pfam" id="PF00883">
    <property type="entry name" value="Peptidase_M17"/>
    <property type="match status" value="1"/>
</dbReference>
<dbReference type="Pfam" id="PF02789">
    <property type="entry name" value="Peptidase_M17_N"/>
    <property type="match status" value="1"/>
</dbReference>
<dbReference type="PRINTS" id="PR00481">
    <property type="entry name" value="LAMNOPPTDASE"/>
</dbReference>
<dbReference type="SUPFAM" id="SSF52949">
    <property type="entry name" value="Macro domain-like"/>
    <property type="match status" value="1"/>
</dbReference>
<dbReference type="SUPFAM" id="SSF53187">
    <property type="entry name" value="Zn-dependent exopeptidases"/>
    <property type="match status" value="1"/>
</dbReference>
<dbReference type="PROSITE" id="PS00631">
    <property type="entry name" value="CYTOSOL_AP"/>
    <property type="match status" value="1"/>
</dbReference>
<protein>
    <recommendedName>
        <fullName evidence="1">Probable cytosol aminopeptidase</fullName>
        <ecNumber evidence="1">3.4.11.1</ecNumber>
    </recommendedName>
    <alternativeName>
        <fullName evidence="1">Leucine aminopeptidase</fullName>
        <shortName evidence="1">LAP</shortName>
        <ecNumber evidence="1">3.4.11.10</ecNumber>
    </alternativeName>
    <alternativeName>
        <fullName evidence="1">Leucyl aminopeptidase</fullName>
    </alternativeName>
</protein>